<sequence>MTTEKIYPIFTVRWLAVHGLAVPTVFFLGSISAMQFIQR</sequence>
<feature type="chain" id="PRO_0000200393" description="Cytochrome b559 subunit beta">
    <location>
        <begin position="1"/>
        <end position="39"/>
    </location>
</feature>
<feature type="transmembrane region" description="Helical" evidence="1">
    <location>
        <begin position="14"/>
        <end position="30"/>
    </location>
</feature>
<feature type="binding site" description="axial binding residue" evidence="1">
    <location>
        <position position="18"/>
    </location>
    <ligand>
        <name>heme</name>
        <dbReference type="ChEBI" id="CHEBI:30413"/>
        <note>ligand shared with alpha subunit</note>
    </ligand>
    <ligandPart>
        <name>Fe</name>
        <dbReference type="ChEBI" id="CHEBI:18248"/>
    </ligandPart>
</feature>
<accession>Q9GFC3</accession>
<geneLocation type="chloroplast"/>
<evidence type="ECO:0000255" key="1">
    <source>
        <dbReference type="HAMAP-Rule" id="MF_00643"/>
    </source>
</evidence>
<comment type="function">
    <text evidence="1">This b-type cytochrome is tightly associated with the reaction center of photosystem II (PSII). PSII is a light-driven water:plastoquinone oxidoreductase that uses light energy to abstract electrons from H(2)O, generating O(2) and a proton gradient subsequently used for ATP formation. It consists of a core antenna complex that captures photons, and an electron transfer chain that converts photonic excitation into a charge separation.</text>
</comment>
<comment type="cofactor">
    <cofactor evidence="1">
        <name>heme b</name>
        <dbReference type="ChEBI" id="CHEBI:60344"/>
    </cofactor>
    <text evidence="1">With its partner (PsbE) binds heme. PSII binds additional chlorophylls, carotenoids and specific lipids.</text>
</comment>
<comment type="subunit">
    <text evidence="1">Heterodimer of an alpha subunit and a beta subunit. PSII is composed of 1 copy each of membrane proteins PsbA, PsbB, PsbC, PsbD, PsbE, PsbF, PsbH, PsbI, PsbJ, PsbK, PsbL, PsbM, PsbT, PsbX, PsbY, PsbZ, Psb30/Ycf12, at least 3 peripheral proteins of the oxygen-evolving complex and a large number of cofactors. It forms dimeric complexes.</text>
</comment>
<comment type="subcellular location">
    <subcellularLocation>
        <location evidence="1">Plastid</location>
        <location evidence="1">Chloroplast thylakoid membrane</location>
        <topology evidence="1">Single-pass membrane protein</topology>
    </subcellularLocation>
</comment>
<comment type="similarity">
    <text evidence="1">Belongs to the PsbE/PsbF family.</text>
</comment>
<dbReference type="EMBL" id="AF123837">
    <property type="protein sequence ID" value="AAG26227.1"/>
    <property type="molecule type" value="Genomic_DNA"/>
</dbReference>
<dbReference type="RefSeq" id="YP_009117859.1">
    <property type="nucleotide sequence ID" value="NC_026301.1"/>
</dbReference>
<dbReference type="SMR" id="Q9GFC3"/>
<dbReference type="GeneID" id="22975676"/>
<dbReference type="GO" id="GO:0009535">
    <property type="term" value="C:chloroplast thylakoid membrane"/>
    <property type="evidence" value="ECO:0007669"/>
    <property type="project" value="UniProtKB-SubCell"/>
</dbReference>
<dbReference type="GO" id="GO:0009539">
    <property type="term" value="C:photosystem II reaction center"/>
    <property type="evidence" value="ECO:0007669"/>
    <property type="project" value="InterPro"/>
</dbReference>
<dbReference type="GO" id="GO:0009055">
    <property type="term" value="F:electron transfer activity"/>
    <property type="evidence" value="ECO:0007669"/>
    <property type="project" value="UniProtKB-UniRule"/>
</dbReference>
<dbReference type="GO" id="GO:0020037">
    <property type="term" value="F:heme binding"/>
    <property type="evidence" value="ECO:0007669"/>
    <property type="project" value="InterPro"/>
</dbReference>
<dbReference type="GO" id="GO:0005506">
    <property type="term" value="F:iron ion binding"/>
    <property type="evidence" value="ECO:0007669"/>
    <property type="project" value="UniProtKB-UniRule"/>
</dbReference>
<dbReference type="GO" id="GO:0009767">
    <property type="term" value="P:photosynthetic electron transport chain"/>
    <property type="evidence" value="ECO:0007669"/>
    <property type="project" value="InterPro"/>
</dbReference>
<dbReference type="HAMAP" id="MF_00643">
    <property type="entry name" value="PSII_PsbF"/>
    <property type="match status" value="1"/>
</dbReference>
<dbReference type="InterPro" id="IPR006241">
    <property type="entry name" value="PSII_cyt_b559_bsu"/>
</dbReference>
<dbReference type="InterPro" id="IPR006216">
    <property type="entry name" value="PSII_cyt_b559_CS"/>
</dbReference>
<dbReference type="InterPro" id="IPR013081">
    <property type="entry name" value="PSII_cyt_b559_N"/>
</dbReference>
<dbReference type="NCBIfam" id="TIGR01333">
    <property type="entry name" value="cyt_b559_beta"/>
    <property type="match status" value="1"/>
</dbReference>
<dbReference type="Pfam" id="PF00283">
    <property type="entry name" value="Cytochrom_B559"/>
    <property type="match status" value="1"/>
</dbReference>
<dbReference type="PIRSF" id="PIRSF000037">
    <property type="entry name" value="PsbF"/>
    <property type="match status" value="1"/>
</dbReference>
<dbReference type="SUPFAM" id="SSF161045">
    <property type="entry name" value="Cytochrome b559 subunits"/>
    <property type="match status" value="1"/>
</dbReference>
<dbReference type="PROSITE" id="PS00537">
    <property type="entry name" value="CYTOCHROME_B559"/>
    <property type="match status" value="1"/>
</dbReference>
<reference key="1">
    <citation type="journal article" date="2000" name="Am. J. Bot.">
        <title>Utility of 17 chloroplast genes for inferring the phylogeny of the basal angiosperms.</title>
        <authorList>
            <person name="Graham S.W."/>
            <person name="Olmstead R.G."/>
        </authorList>
    </citation>
    <scope>NUCLEOTIDE SEQUENCE [GENOMIC DNA]</scope>
</reference>
<gene>
    <name evidence="1" type="primary">psbF</name>
</gene>
<keyword id="KW-0150">Chloroplast</keyword>
<keyword id="KW-0249">Electron transport</keyword>
<keyword id="KW-0349">Heme</keyword>
<keyword id="KW-0408">Iron</keyword>
<keyword id="KW-0472">Membrane</keyword>
<keyword id="KW-0479">Metal-binding</keyword>
<keyword id="KW-0602">Photosynthesis</keyword>
<keyword id="KW-0604">Photosystem II</keyword>
<keyword id="KW-0934">Plastid</keyword>
<keyword id="KW-0793">Thylakoid</keyword>
<keyword id="KW-0812">Transmembrane</keyword>
<keyword id="KW-1133">Transmembrane helix</keyword>
<keyword id="KW-0813">Transport</keyword>
<protein>
    <recommendedName>
        <fullName evidence="1">Cytochrome b559 subunit beta</fullName>
    </recommendedName>
    <alternativeName>
        <fullName evidence="1">PSII reaction center subunit VI</fullName>
    </alternativeName>
</protein>
<organism>
    <name type="scientific">Gnetum gnemon</name>
    <name type="common">Spanish joint-fir</name>
    <name type="synonym">Gnetum acutatum</name>
    <dbReference type="NCBI Taxonomy" id="3382"/>
    <lineage>
        <taxon>Eukaryota</taxon>
        <taxon>Viridiplantae</taxon>
        <taxon>Streptophyta</taxon>
        <taxon>Embryophyta</taxon>
        <taxon>Tracheophyta</taxon>
        <taxon>Spermatophyta</taxon>
        <taxon>Gnetopsida</taxon>
        <taxon>Gnetidae</taxon>
        <taxon>Gnetales</taxon>
        <taxon>Gnetaceae</taxon>
        <taxon>Gnetum</taxon>
    </lineage>
</organism>
<proteinExistence type="inferred from homology"/>
<name>PSBF_GNEGN</name>